<name>FTHS_NATTJ</name>
<comment type="catalytic activity">
    <reaction evidence="1">
        <text>(6S)-5,6,7,8-tetrahydrofolate + formate + ATP = (6R)-10-formyltetrahydrofolate + ADP + phosphate</text>
        <dbReference type="Rhea" id="RHEA:20221"/>
        <dbReference type="ChEBI" id="CHEBI:15740"/>
        <dbReference type="ChEBI" id="CHEBI:30616"/>
        <dbReference type="ChEBI" id="CHEBI:43474"/>
        <dbReference type="ChEBI" id="CHEBI:57453"/>
        <dbReference type="ChEBI" id="CHEBI:195366"/>
        <dbReference type="ChEBI" id="CHEBI:456216"/>
        <dbReference type="EC" id="6.3.4.3"/>
    </reaction>
</comment>
<comment type="pathway">
    <text evidence="1">One-carbon metabolism; tetrahydrofolate interconversion.</text>
</comment>
<comment type="similarity">
    <text evidence="1">Belongs to the formate--tetrahydrofolate ligase family.</text>
</comment>
<evidence type="ECO:0000255" key="1">
    <source>
        <dbReference type="HAMAP-Rule" id="MF_01543"/>
    </source>
</evidence>
<gene>
    <name evidence="1" type="primary">fhs</name>
    <name type="ordered locus">Nther_0083</name>
</gene>
<accession>B2A3Q6</accession>
<dbReference type="EC" id="6.3.4.3" evidence="1"/>
<dbReference type="EMBL" id="CP001034">
    <property type="protein sequence ID" value="ACB83682.1"/>
    <property type="molecule type" value="Genomic_DNA"/>
</dbReference>
<dbReference type="RefSeq" id="WP_012446573.1">
    <property type="nucleotide sequence ID" value="NC_010718.1"/>
</dbReference>
<dbReference type="SMR" id="B2A3Q6"/>
<dbReference type="STRING" id="457570.Nther_0083"/>
<dbReference type="KEGG" id="nth:Nther_0083"/>
<dbReference type="eggNOG" id="COG2759">
    <property type="taxonomic scope" value="Bacteria"/>
</dbReference>
<dbReference type="HOGENOM" id="CLU_003601_3_3_9"/>
<dbReference type="InParanoid" id="B2A3Q6"/>
<dbReference type="OrthoDB" id="9761733at2"/>
<dbReference type="UniPathway" id="UPA00193"/>
<dbReference type="Proteomes" id="UP000001683">
    <property type="component" value="Chromosome"/>
</dbReference>
<dbReference type="GO" id="GO:0005524">
    <property type="term" value="F:ATP binding"/>
    <property type="evidence" value="ECO:0007669"/>
    <property type="project" value="UniProtKB-UniRule"/>
</dbReference>
<dbReference type="GO" id="GO:0004329">
    <property type="term" value="F:formate-tetrahydrofolate ligase activity"/>
    <property type="evidence" value="ECO:0007669"/>
    <property type="project" value="UniProtKB-UniRule"/>
</dbReference>
<dbReference type="GO" id="GO:0035999">
    <property type="term" value="P:tetrahydrofolate interconversion"/>
    <property type="evidence" value="ECO:0007669"/>
    <property type="project" value="UniProtKB-UniRule"/>
</dbReference>
<dbReference type="CDD" id="cd00477">
    <property type="entry name" value="FTHFS"/>
    <property type="match status" value="1"/>
</dbReference>
<dbReference type="FunFam" id="3.30.1510.10:FF:000001">
    <property type="entry name" value="Formate--tetrahydrofolate ligase"/>
    <property type="match status" value="1"/>
</dbReference>
<dbReference type="FunFam" id="3.10.410.10:FF:000001">
    <property type="entry name" value="Putative formate--tetrahydrofolate ligase"/>
    <property type="match status" value="1"/>
</dbReference>
<dbReference type="Gene3D" id="3.30.1510.10">
    <property type="entry name" value="Domain 2, N(10)-formyltetrahydrofolate synthetase"/>
    <property type="match status" value="1"/>
</dbReference>
<dbReference type="Gene3D" id="3.10.410.10">
    <property type="entry name" value="Formyltetrahydrofolate synthetase, domain 3"/>
    <property type="match status" value="1"/>
</dbReference>
<dbReference type="Gene3D" id="3.40.50.300">
    <property type="entry name" value="P-loop containing nucleotide triphosphate hydrolases"/>
    <property type="match status" value="1"/>
</dbReference>
<dbReference type="HAMAP" id="MF_01543">
    <property type="entry name" value="FTHFS"/>
    <property type="match status" value="1"/>
</dbReference>
<dbReference type="InterPro" id="IPR000559">
    <property type="entry name" value="Formate_THF_ligase"/>
</dbReference>
<dbReference type="InterPro" id="IPR020628">
    <property type="entry name" value="Formate_THF_ligase_CS"/>
</dbReference>
<dbReference type="InterPro" id="IPR027417">
    <property type="entry name" value="P-loop_NTPase"/>
</dbReference>
<dbReference type="NCBIfam" id="NF010030">
    <property type="entry name" value="PRK13505.1"/>
    <property type="match status" value="1"/>
</dbReference>
<dbReference type="Pfam" id="PF01268">
    <property type="entry name" value="FTHFS"/>
    <property type="match status" value="1"/>
</dbReference>
<dbReference type="SUPFAM" id="SSF52540">
    <property type="entry name" value="P-loop containing nucleoside triphosphate hydrolases"/>
    <property type="match status" value="1"/>
</dbReference>
<dbReference type="PROSITE" id="PS00721">
    <property type="entry name" value="FTHFS_1"/>
    <property type="match status" value="1"/>
</dbReference>
<dbReference type="PROSITE" id="PS00722">
    <property type="entry name" value="FTHFS_2"/>
    <property type="match status" value="1"/>
</dbReference>
<reference key="1">
    <citation type="submission" date="2008-04" db="EMBL/GenBank/DDBJ databases">
        <title>Complete sequence of chromosome of Natranaerobius thermophilus JW/NM-WN-LF.</title>
        <authorList>
            <consortium name="US DOE Joint Genome Institute"/>
            <person name="Copeland A."/>
            <person name="Lucas S."/>
            <person name="Lapidus A."/>
            <person name="Glavina del Rio T."/>
            <person name="Dalin E."/>
            <person name="Tice H."/>
            <person name="Bruce D."/>
            <person name="Goodwin L."/>
            <person name="Pitluck S."/>
            <person name="Chertkov O."/>
            <person name="Brettin T."/>
            <person name="Detter J.C."/>
            <person name="Han C."/>
            <person name="Kuske C.R."/>
            <person name="Schmutz J."/>
            <person name="Larimer F."/>
            <person name="Land M."/>
            <person name="Hauser L."/>
            <person name="Kyrpides N."/>
            <person name="Lykidis A."/>
            <person name="Mesbah N.M."/>
            <person name="Wiegel J."/>
        </authorList>
    </citation>
    <scope>NUCLEOTIDE SEQUENCE [LARGE SCALE GENOMIC DNA]</scope>
    <source>
        <strain>ATCC BAA-1301 / DSM 18059 / JW/NM-WN-LF</strain>
    </source>
</reference>
<organism>
    <name type="scientific">Natranaerobius thermophilus (strain ATCC BAA-1301 / DSM 18059 / JW/NM-WN-LF)</name>
    <dbReference type="NCBI Taxonomy" id="457570"/>
    <lineage>
        <taxon>Bacteria</taxon>
        <taxon>Bacillati</taxon>
        <taxon>Bacillota</taxon>
        <taxon>Clostridia</taxon>
        <taxon>Natranaerobiales</taxon>
        <taxon>Natranaerobiaceae</taxon>
        <taxon>Natranaerobius</taxon>
    </lineage>
</organism>
<protein>
    <recommendedName>
        <fullName evidence="1">Formate--tetrahydrofolate ligase</fullName>
        <ecNumber evidence="1">6.3.4.3</ecNumber>
    </recommendedName>
    <alternativeName>
        <fullName evidence="1">Formyltetrahydrofolate synthetase</fullName>
        <shortName evidence="1">FHS</shortName>
        <shortName evidence="1">FTHFS</shortName>
    </alternativeName>
</protein>
<sequence length="556" mass="60470">MKSDIEIARGAPMRPIKDIASEVGIKDEELELYGDYKAKITFDAWKRLKDKPDGNLILVTAITPTPAGEGKSTTTVGLGQALKRLGKNTMVALREPSLGPSFGVKGGAAGGGYSQVVPMEDINLHFTGDIHAITTAHNLLSAAIDNHIHQGNNLDIDARRINWRRVVDLNDRALRNTVVALGGRGNGFPREDGFDITVASEIMAILCLATDIKDLKERLSKIIIGYTRDRQPVTVADLKMQGSMAVLLKDAIKPNLVQTYENVPAFVHGGPFANIAHGCNSAMATQMGVKMSDYLVTEAGFGADLGAEKFFNIKCRFAGLNPDAAVVVATARALKMHGGVEKDNLKEENLEALEKGFENLEKHMENINKFGVPAVVAVNRFPTDTEKELELLINKCQEKGYRVALSEVFAKGGEGGEEVAKEVLDIIDSKESNFKYLYDVDKSMEEKIETIAKEIYGASDVEFTPTARRNIKQLAQKGLDQVPVCMAKTQFSFSDDPKLLGRPKDFSITVKRVRISAGAGFAVAMTGDIMTMPGLPKQPAAEEIDIDDDGQITGLF</sequence>
<feature type="chain" id="PRO_1000196818" description="Formate--tetrahydrofolate ligase">
    <location>
        <begin position="1"/>
        <end position="556"/>
    </location>
</feature>
<feature type="binding site" evidence="1">
    <location>
        <begin position="65"/>
        <end position="72"/>
    </location>
    <ligand>
        <name>ATP</name>
        <dbReference type="ChEBI" id="CHEBI:30616"/>
    </ligand>
</feature>
<proteinExistence type="inferred from homology"/>
<keyword id="KW-0067">ATP-binding</keyword>
<keyword id="KW-0436">Ligase</keyword>
<keyword id="KW-0547">Nucleotide-binding</keyword>
<keyword id="KW-0554">One-carbon metabolism</keyword>
<keyword id="KW-1185">Reference proteome</keyword>